<name>KCY_BRASO</name>
<organism>
    <name type="scientific">Bradyrhizobium sp. (strain ORS 278)</name>
    <dbReference type="NCBI Taxonomy" id="114615"/>
    <lineage>
        <taxon>Bacteria</taxon>
        <taxon>Pseudomonadati</taxon>
        <taxon>Pseudomonadota</taxon>
        <taxon>Alphaproteobacteria</taxon>
        <taxon>Hyphomicrobiales</taxon>
        <taxon>Nitrobacteraceae</taxon>
        <taxon>Bradyrhizobium</taxon>
    </lineage>
</organism>
<keyword id="KW-0067">ATP-binding</keyword>
<keyword id="KW-0963">Cytoplasm</keyword>
<keyword id="KW-0418">Kinase</keyword>
<keyword id="KW-0547">Nucleotide-binding</keyword>
<keyword id="KW-1185">Reference proteome</keyword>
<keyword id="KW-0808">Transferase</keyword>
<sequence length="212" mass="22644">MIIAIDGPAASGKGTMAKRLAAHYGLRHLDTGVIYRAVAHALLTAGLDLKDEARAAEVAMTLDPSTFDNPAFRSHEVGSAASVVSALPKVREALLAFQRQFASQPPGAVLDGRDIGTVICPDAEVKIYVVADPKIRAHRRTLEARSRGEPADEAAILADILARDERDQNRAVAPLKQAADAYLLDNSHLDIESGVRAAIDIVEAVRAGRQRV</sequence>
<gene>
    <name evidence="1" type="primary">cmk</name>
    <name type="ordered locus">BRADO0097</name>
</gene>
<reference key="1">
    <citation type="journal article" date="2007" name="Science">
        <title>Legumes symbioses: absence of nod genes in photosynthetic bradyrhizobia.</title>
        <authorList>
            <person name="Giraud E."/>
            <person name="Moulin L."/>
            <person name="Vallenet D."/>
            <person name="Barbe V."/>
            <person name="Cytryn E."/>
            <person name="Avarre J.-C."/>
            <person name="Jaubert M."/>
            <person name="Simon D."/>
            <person name="Cartieaux F."/>
            <person name="Prin Y."/>
            <person name="Bena G."/>
            <person name="Hannibal L."/>
            <person name="Fardoux J."/>
            <person name="Kojadinovic M."/>
            <person name="Vuillet L."/>
            <person name="Lajus A."/>
            <person name="Cruveiller S."/>
            <person name="Rouy Z."/>
            <person name="Mangenot S."/>
            <person name="Segurens B."/>
            <person name="Dossat C."/>
            <person name="Franck W.L."/>
            <person name="Chang W.-S."/>
            <person name="Saunders E."/>
            <person name="Bruce D."/>
            <person name="Richardson P."/>
            <person name="Normand P."/>
            <person name="Dreyfus B."/>
            <person name="Pignol D."/>
            <person name="Stacey G."/>
            <person name="Emerich D."/>
            <person name="Vermeglio A."/>
            <person name="Medigue C."/>
            <person name="Sadowsky M."/>
        </authorList>
    </citation>
    <scope>NUCLEOTIDE SEQUENCE [LARGE SCALE GENOMIC DNA]</scope>
    <source>
        <strain>ORS 278</strain>
    </source>
</reference>
<dbReference type="EC" id="2.7.4.25" evidence="1"/>
<dbReference type="EMBL" id="CU234118">
    <property type="protein sequence ID" value="CAL74068.1"/>
    <property type="molecule type" value="Genomic_DNA"/>
</dbReference>
<dbReference type="RefSeq" id="WP_011923368.1">
    <property type="nucleotide sequence ID" value="NC_009445.1"/>
</dbReference>
<dbReference type="SMR" id="A4YJJ2"/>
<dbReference type="STRING" id="114615.BRADO0097"/>
<dbReference type="KEGG" id="bra:BRADO0097"/>
<dbReference type="eggNOG" id="COG0283">
    <property type="taxonomic scope" value="Bacteria"/>
</dbReference>
<dbReference type="HOGENOM" id="CLU_079959_0_1_5"/>
<dbReference type="OrthoDB" id="9807434at2"/>
<dbReference type="Proteomes" id="UP000001994">
    <property type="component" value="Chromosome"/>
</dbReference>
<dbReference type="GO" id="GO:0005737">
    <property type="term" value="C:cytoplasm"/>
    <property type="evidence" value="ECO:0007669"/>
    <property type="project" value="UniProtKB-SubCell"/>
</dbReference>
<dbReference type="GO" id="GO:0005524">
    <property type="term" value="F:ATP binding"/>
    <property type="evidence" value="ECO:0007669"/>
    <property type="project" value="UniProtKB-UniRule"/>
</dbReference>
<dbReference type="GO" id="GO:0036430">
    <property type="term" value="F:CMP kinase activity"/>
    <property type="evidence" value="ECO:0007669"/>
    <property type="project" value="RHEA"/>
</dbReference>
<dbReference type="GO" id="GO:0036431">
    <property type="term" value="F:dCMP kinase activity"/>
    <property type="evidence" value="ECO:0007669"/>
    <property type="project" value="RHEA"/>
</dbReference>
<dbReference type="GO" id="GO:0006220">
    <property type="term" value="P:pyrimidine nucleotide metabolic process"/>
    <property type="evidence" value="ECO:0007669"/>
    <property type="project" value="UniProtKB-UniRule"/>
</dbReference>
<dbReference type="CDD" id="cd02020">
    <property type="entry name" value="CMPK"/>
    <property type="match status" value="1"/>
</dbReference>
<dbReference type="Gene3D" id="3.40.50.300">
    <property type="entry name" value="P-loop containing nucleotide triphosphate hydrolases"/>
    <property type="match status" value="1"/>
</dbReference>
<dbReference type="HAMAP" id="MF_00238">
    <property type="entry name" value="Cytidyl_kinase_type1"/>
    <property type="match status" value="1"/>
</dbReference>
<dbReference type="InterPro" id="IPR003136">
    <property type="entry name" value="Cytidylate_kin"/>
</dbReference>
<dbReference type="InterPro" id="IPR011994">
    <property type="entry name" value="Cytidylate_kinase_dom"/>
</dbReference>
<dbReference type="InterPro" id="IPR027417">
    <property type="entry name" value="P-loop_NTPase"/>
</dbReference>
<dbReference type="NCBIfam" id="TIGR00017">
    <property type="entry name" value="cmk"/>
    <property type="match status" value="1"/>
</dbReference>
<dbReference type="Pfam" id="PF02224">
    <property type="entry name" value="Cytidylate_kin"/>
    <property type="match status" value="1"/>
</dbReference>
<dbReference type="SUPFAM" id="SSF52540">
    <property type="entry name" value="P-loop containing nucleoside triphosphate hydrolases"/>
    <property type="match status" value="1"/>
</dbReference>
<feature type="chain" id="PRO_1000048189" description="Cytidylate kinase">
    <location>
        <begin position="1"/>
        <end position="212"/>
    </location>
</feature>
<feature type="binding site" evidence="1">
    <location>
        <begin position="7"/>
        <end position="15"/>
    </location>
    <ligand>
        <name>ATP</name>
        <dbReference type="ChEBI" id="CHEBI:30616"/>
    </ligand>
</feature>
<protein>
    <recommendedName>
        <fullName evidence="1">Cytidylate kinase</fullName>
        <shortName evidence="1">CK</shortName>
        <ecNumber evidence="1">2.7.4.25</ecNumber>
    </recommendedName>
    <alternativeName>
        <fullName evidence="1">Cytidine monophosphate kinase</fullName>
        <shortName evidence="1">CMP kinase</shortName>
    </alternativeName>
</protein>
<comment type="catalytic activity">
    <reaction evidence="1">
        <text>CMP + ATP = CDP + ADP</text>
        <dbReference type="Rhea" id="RHEA:11600"/>
        <dbReference type="ChEBI" id="CHEBI:30616"/>
        <dbReference type="ChEBI" id="CHEBI:58069"/>
        <dbReference type="ChEBI" id="CHEBI:60377"/>
        <dbReference type="ChEBI" id="CHEBI:456216"/>
        <dbReference type="EC" id="2.7.4.25"/>
    </reaction>
</comment>
<comment type="catalytic activity">
    <reaction evidence="1">
        <text>dCMP + ATP = dCDP + ADP</text>
        <dbReference type="Rhea" id="RHEA:25094"/>
        <dbReference type="ChEBI" id="CHEBI:30616"/>
        <dbReference type="ChEBI" id="CHEBI:57566"/>
        <dbReference type="ChEBI" id="CHEBI:58593"/>
        <dbReference type="ChEBI" id="CHEBI:456216"/>
        <dbReference type="EC" id="2.7.4.25"/>
    </reaction>
</comment>
<comment type="subcellular location">
    <subcellularLocation>
        <location evidence="1">Cytoplasm</location>
    </subcellularLocation>
</comment>
<comment type="similarity">
    <text evidence="1">Belongs to the cytidylate kinase family. Type 1 subfamily.</text>
</comment>
<accession>A4YJJ2</accession>
<evidence type="ECO:0000255" key="1">
    <source>
        <dbReference type="HAMAP-Rule" id="MF_00238"/>
    </source>
</evidence>
<proteinExistence type="inferred from homology"/>